<accession>Q0RDQ8</accession>
<organism>
    <name type="scientific">Frankia alni (strain DSM 45986 / CECT 9034 / ACN14a)</name>
    <dbReference type="NCBI Taxonomy" id="326424"/>
    <lineage>
        <taxon>Bacteria</taxon>
        <taxon>Bacillati</taxon>
        <taxon>Actinomycetota</taxon>
        <taxon>Actinomycetes</taxon>
        <taxon>Frankiales</taxon>
        <taxon>Frankiaceae</taxon>
        <taxon>Frankia</taxon>
    </lineage>
</organism>
<evidence type="ECO:0000255" key="1">
    <source>
        <dbReference type="HAMAP-Rule" id="MF_01849"/>
    </source>
</evidence>
<evidence type="ECO:0000255" key="2">
    <source>
        <dbReference type="PROSITE-ProRule" id="PRU01266"/>
    </source>
</evidence>
<evidence type="ECO:0000256" key="3">
    <source>
        <dbReference type="SAM" id="MobiDB-lite"/>
    </source>
</evidence>
<gene>
    <name evidence="1" type="primary">rlmN</name>
    <name type="ordered locus">FRAAL5776</name>
</gene>
<sequence length="419" mass="44374">MTAESDSPDGPVSAGTGRPVRLSLTRRAARPARHLADLSRDERRQVAVALGQPAFRADQVSRHYFARLVDADETDAMTDLPENARGPLLEALLPRLLVPARTLSCDDGLTRKTAWRTADGALLESVIMRYPDRATVCVSSQAGCGMGCPFCATGQGGLTRNLSTAEIVEQVVHAARVLRRQELAGGQGRLSNVVFMGMGEPLANYTAVTAALRRLIAPSPEGLGLSARGLTVSTVGLVPAMRRLAGEGLPVTLAVSLHAPDDELRDELVPINTRWPVAEVLAAAWEYAEVTGRRVSIEYALIDGVNDDVARADALATLLAGRLAHVNLIPLNPTEGSSWQASAPAGQRAFVRRLRERGIATTVRDTRGREIAAACGQLAAEPAGRARRVESARPVESARPVGVAGAASGSPAHGSRVLR</sequence>
<feature type="chain" id="PRO_0000350188" description="Probable dual-specificity RNA methyltransferase RlmN">
    <location>
        <begin position="1"/>
        <end position="419"/>
    </location>
</feature>
<feature type="domain" description="Radical SAM core" evidence="2">
    <location>
        <begin position="130"/>
        <end position="369"/>
    </location>
</feature>
<feature type="region of interest" description="Disordered" evidence="3">
    <location>
        <begin position="1"/>
        <end position="21"/>
    </location>
</feature>
<feature type="region of interest" description="Disordered" evidence="3">
    <location>
        <begin position="383"/>
        <end position="419"/>
    </location>
</feature>
<feature type="compositionally biased region" description="Low complexity" evidence="3">
    <location>
        <begin position="397"/>
        <end position="419"/>
    </location>
</feature>
<feature type="active site" description="Proton acceptor" evidence="1">
    <location>
        <position position="124"/>
    </location>
</feature>
<feature type="active site" description="S-methylcysteine intermediate" evidence="1">
    <location>
        <position position="375"/>
    </location>
</feature>
<feature type="binding site" evidence="1">
    <location>
        <position position="144"/>
    </location>
    <ligand>
        <name>[4Fe-4S] cluster</name>
        <dbReference type="ChEBI" id="CHEBI:49883"/>
        <note>4Fe-4S-S-AdoMet</note>
    </ligand>
</feature>
<feature type="binding site" evidence="1">
    <location>
        <position position="148"/>
    </location>
    <ligand>
        <name>[4Fe-4S] cluster</name>
        <dbReference type="ChEBI" id="CHEBI:49883"/>
        <note>4Fe-4S-S-AdoMet</note>
    </ligand>
</feature>
<feature type="binding site" evidence="1">
    <location>
        <position position="151"/>
    </location>
    <ligand>
        <name>[4Fe-4S] cluster</name>
        <dbReference type="ChEBI" id="CHEBI:49883"/>
        <note>4Fe-4S-S-AdoMet</note>
    </ligand>
</feature>
<feature type="binding site" evidence="1">
    <location>
        <begin position="199"/>
        <end position="200"/>
    </location>
    <ligand>
        <name>S-adenosyl-L-methionine</name>
        <dbReference type="ChEBI" id="CHEBI:59789"/>
    </ligand>
</feature>
<feature type="binding site" evidence="1">
    <location>
        <position position="233"/>
    </location>
    <ligand>
        <name>S-adenosyl-L-methionine</name>
        <dbReference type="ChEBI" id="CHEBI:59789"/>
    </ligand>
</feature>
<feature type="binding site" evidence="1">
    <location>
        <begin position="256"/>
        <end position="258"/>
    </location>
    <ligand>
        <name>S-adenosyl-L-methionine</name>
        <dbReference type="ChEBI" id="CHEBI:59789"/>
    </ligand>
</feature>
<feature type="binding site" evidence="1">
    <location>
        <position position="332"/>
    </location>
    <ligand>
        <name>S-adenosyl-L-methionine</name>
        <dbReference type="ChEBI" id="CHEBI:59789"/>
    </ligand>
</feature>
<feature type="disulfide bond" description="(transient)" evidence="1">
    <location>
        <begin position="137"/>
        <end position="375"/>
    </location>
</feature>
<protein>
    <recommendedName>
        <fullName evidence="1">Probable dual-specificity RNA methyltransferase RlmN</fullName>
        <ecNumber evidence="1">2.1.1.192</ecNumber>
    </recommendedName>
    <alternativeName>
        <fullName evidence="1">23S rRNA (adenine(2503)-C(2))-methyltransferase</fullName>
    </alternativeName>
    <alternativeName>
        <fullName evidence="1">23S rRNA m2A2503 methyltransferase</fullName>
    </alternativeName>
    <alternativeName>
        <fullName evidence="1">Ribosomal RNA large subunit methyltransferase N</fullName>
    </alternativeName>
    <alternativeName>
        <fullName evidence="1">tRNA (adenine(37)-C(2))-methyltransferase</fullName>
    </alternativeName>
    <alternativeName>
        <fullName evidence="1">tRNA m2A37 methyltransferase</fullName>
    </alternativeName>
</protein>
<reference key="1">
    <citation type="journal article" date="2007" name="Genome Res.">
        <title>Genome characteristics of facultatively symbiotic Frankia sp. strains reflect host range and host plant biogeography.</title>
        <authorList>
            <person name="Normand P."/>
            <person name="Lapierre P."/>
            <person name="Tisa L.S."/>
            <person name="Gogarten J.P."/>
            <person name="Alloisio N."/>
            <person name="Bagnarol E."/>
            <person name="Bassi C.A."/>
            <person name="Berry A.M."/>
            <person name="Bickhart D.M."/>
            <person name="Choisne N."/>
            <person name="Couloux A."/>
            <person name="Cournoyer B."/>
            <person name="Cruveiller S."/>
            <person name="Daubin V."/>
            <person name="Demange N."/>
            <person name="Francino M.P."/>
            <person name="Goltsman E."/>
            <person name="Huang Y."/>
            <person name="Kopp O.R."/>
            <person name="Labarre L."/>
            <person name="Lapidus A."/>
            <person name="Lavire C."/>
            <person name="Marechal J."/>
            <person name="Martinez M."/>
            <person name="Mastronunzio J.E."/>
            <person name="Mullin B.C."/>
            <person name="Niemann J."/>
            <person name="Pujic P."/>
            <person name="Rawnsley T."/>
            <person name="Rouy Z."/>
            <person name="Schenowitz C."/>
            <person name="Sellstedt A."/>
            <person name="Tavares F."/>
            <person name="Tomkins J.P."/>
            <person name="Vallenet D."/>
            <person name="Valverde C."/>
            <person name="Wall L.G."/>
            <person name="Wang Y."/>
            <person name="Medigue C."/>
            <person name="Benson D.R."/>
        </authorList>
    </citation>
    <scope>NUCLEOTIDE SEQUENCE [LARGE SCALE GENOMIC DNA]</scope>
    <source>
        <strain>DSM 45986 / CECT 9034 / ACN14a</strain>
    </source>
</reference>
<proteinExistence type="inferred from homology"/>
<keyword id="KW-0004">4Fe-4S</keyword>
<keyword id="KW-0963">Cytoplasm</keyword>
<keyword id="KW-1015">Disulfide bond</keyword>
<keyword id="KW-0408">Iron</keyword>
<keyword id="KW-0411">Iron-sulfur</keyword>
<keyword id="KW-0479">Metal-binding</keyword>
<keyword id="KW-0489">Methyltransferase</keyword>
<keyword id="KW-1185">Reference proteome</keyword>
<keyword id="KW-0698">rRNA processing</keyword>
<keyword id="KW-0949">S-adenosyl-L-methionine</keyword>
<keyword id="KW-0808">Transferase</keyword>
<keyword id="KW-0819">tRNA processing</keyword>
<comment type="function">
    <text evidence="1">Specifically methylates position 2 of adenine 2503 in 23S rRNA and position 2 of adenine 37 in tRNAs.</text>
</comment>
<comment type="catalytic activity">
    <reaction evidence="1">
        <text>adenosine(2503) in 23S rRNA + 2 reduced [2Fe-2S]-[ferredoxin] + 2 S-adenosyl-L-methionine = 2-methyladenosine(2503) in 23S rRNA + 5'-deoxyadenosine + L-methionine + 2 oxidized [2Fe-2S]-[ferredoxin] + S-adenosyl-L-homocysteine</text>
        <dbReference type="Rhea" id="RHEA:42916"/>
        <dbReference type="Rhea" id="RHEA-COMP:10000"/>
        <dbReference type="Rhea" id="RHEA-COMP:10001"/>
        <dbReference type="Rhea" id="RHEA-COMP:10152"/>
        <dbReference type="Rhea" id="RHEA-COMP:10282"/>
        <dbReference type="ChEBI" id="CHEBI:17319"/>
        <dbReference type="ChEBI" id="CHEBI:33737"/>
        <dbReference type="ChEBI" id="CHEBI:33738"/>
        <dbReference type="ChEBI" id="CHEBI:57844"/>
        <dbReference type="ChEBI" id="CHEBI:57856"/>
        <dbReference type="ChEBI" id="CHEBI:59789"/>
        <dbReference type="ChEBI" id="CHEBI:74411"/>
        <dbReference type="ChEBI" id="CHEBI:74497"/>
        <dbReference type="EC" id="2.1.1.192"/>
    </reaction>
</comment>
<comment type="catalytic activity">
    <reaction evidence="1">
        <text>adenosine(37) in tRNA + 2 reduced [2Fe-2S]-[ferredoxin] + 2 S-adenosyl-L-methionine = 2-methyladenosine(37) in tRNA + 5'-deoxyadenosine + L-methionine + 2 oxidized [2Fe-2S]-[ferredoxin] + S-adenosyl-L-homocysteine</text>
        <dbReference type="Rhea" id="RHEA:43332"/>
        <dbReference type="Rhea" id="RHEA-COMP:10000"/>
        <dbReference type="Rhea" id="RHEA-COMP:10001"/>
        <dbReference type="Rhea" id="RHEA-COMP:10162"/>
        <dbReference type="Rhea" id="RHEA-COMP:10485"/>
        <dbReference type="ChEBI" id="CHEBI:17319"/>
        <dbReference type="ChEBI" id="CHEBI:33737"/>
        <dbReference type="ChEBI" id="CHEBI:33738"/>
        <dbReference type="ChEBI" id="CHEBI:57844"/>
        <dbReference type="ChEBI" id="CHEBI:57856"/>
        <dbReference type="ChEBI" id="CHEBI:59789"/>
        <dbReference type="ChEBI" id="CHEBI:74411"/>
        <dbReference type="ChEBI" id="CHEBI:74497"/>
        <dbReference type="EC" id="2.1.1.192"/>
    </reaction>
</comment>
<comment type="cofactor">
    <cofactor evidence="1">
        <name>[4Fe-4S] cluster</name>
        <dbReference type="ChEBI" id="CHEBI:49883"/>
    </cofactor>
    <text evidence="1">Binds 1 [4Fe-4S] cluster. The cluster is coordinated with 3 cysteines and an exchangeable S-adenosyl-L-methionine.</text>
</comment>
<comment type="subcellular location">
    <subcellularLocation>
        <location evidence="1">Cytoplasm</location>
    </subcellularLocation>
</comment>
<comment type="miscellaneous">
    <text evidence="1">Reaction proceeds by a ping-pong mechanism involving intermediate methylation of a conserved cysteine residue.</text>
</comment>
<comment type="similarity">
    <text evidence="1">Belongs to the radical SAM superfamily. RlmN family.</text>
</comment>
<name>RLMN_FRAAA</name>
<dbReference type="EC" id="2.1.1.192" evidence="1"/>
<dbReference type="EMBL" id="CT573213">
    <property type="protein sequence ID" value="CAJ64408.1"/>
    <property type="molecule type" value="Genomic_DNA"/>
</dbReference>
<dbReference type="SMR" id="Q0RDQ8"/>
<dbReference type="STRING" id="326424.FRAAL5776"/>
<dbReference type="KEGG" id="fal:FRAAL5776"/>
<dbReference type="eggNOG" id="COG0820">
    <property type="taxonomic scope" value="Bacteria"/>
</dbReference>
<dbReference type="HOGENOM" id="CLU_029101_0_2_11"/>
<dbReference type="Proteomes" id="UP000000657">
    <property type="component" value="Chromosome"/>
</dbReference>
<dbReference type="GO" id="GO:0005737">
    <property type="term" value="C:cytoplasm"/>
    <property type="evidence" value="ECO:0007669"/>
    <property type="project" value="UniProtKB-SubCell"/>
</dbReference>
<dbReference type="GO" id="GO:0051539">
    <property type="term" value="F:4 iron, 4 sulfur cluster binding"/>
    <property type="evidence" value="ECO:0007669"/>
    <property type="project" value="UniProtKB-UniRule"/>
</dbReference>
<dbReference type="GO" id="GO:0046872">
    <property type="term" value="F:metal ion binding"/>
    <property type="evidence" value="ECO:0007669"/>
    <property type="project" value="UniProtKB-KW"/>
</dbReference>
<dbReference type="GO" id="GO:0070040">
    <property type="term" value="F:rRNA (adenine(2503)-C2-)-methyltransferase activity"/>
    <property type="evidence" value="ECO:0007669"/>
    <property type="project" value="UniProtKB-UniRule"/>
</dbReference>
<dbReference type="GO" id="GO:0019843">
    <property type="term" value="F:rRNA binding"/>
    <property type="evidence" value="ECO:0007669"/>
    <property type="project" value="UniProtKB-UniRule"/>
</dbReference>
<dbReference type="GO" id="GO:0002935">
    <property type="term" value="F:tRNA (adenine(37)-C2)-methyltransferase activity"/>
    <property type="evidence" value="ECO:0007669"/>
    <property type="project" value="UniProtKB-UniRule"/>
</dbReference>
<dbReference type="GO" id="GO:0000049">
    <property type="term" value="F:tRNA binding"/>
    <property type="evidence" value="ECO:0007669"/>
    <property type="project" value="UniProtKB-UniRule"/>
</dbReference>
<dbReference type="GO" id="GO:0070475">
    <property type="term" value="P:rRNA base methylation"/>
    <property type="evidence" value="ECO:0007669"/>
    <property type="project" value="UniProtKB-UniRule"/>
</dbReference>
<dbReference type="GO" id="GO:0030488">
    <property type="term" value="P:tRNA methylation"/>
    <property type="evidence" value="ECO:0007669"/>
    <property type="project" value="UniProtKB-UniRule"/>
</dbReference>
<dbReference type="CDD" id="cd01335">
    <property type="entry name" value="Radical_SAM"/>
    <property type="match status" value="1"/>
</dbReference>
<dbReference type="FunFam" id="3.20.20.70:FF:000014">
    <property type="entry name" value="Probable dual-specificity RNA methyltransferase RlmN"/>
    <property type="match status" value="1"/>
</dbReference>
<dbReference type="Gene3D" id="1.10.150.530">
    <property type="match status" value="1"/>
</dbReference>
<dbReference type="Gene3D" id="3.20.20.70">
    <property type="entry name" value="Aldolase class I"/>
    <property type="match status" value="1"/>
</dbReference>
<dbReference type="HAMAP" id="MF_01849">
    <property type="entry name" value="RNA_methyltr_RlmN"/>
    <property type="match status" value="1"/>
</dbReference>
<dbReference type="InterPro" id="IPR013785">
    <property type="entry name" value="Aldolase_TIM"/>
</dbReference>
<dbReference type="InterPro" id="IPR040072">
    <property type="entry name" value="Methyltransferase_A"/>
</dbReference>
<dbReference type="InterPro" id="IPR027492">
    <property type="entry name" value="RNA_MTrfase_RlmN"/>
</dbReference>
<dbReference type="InterPro" id="IPR004383">
    <property type="entry name" value="rRNA_lsu_MTrfase_RlmN/Cfr"/>
</dbReference>
<dbReference type="InterPro" id="IPR007197">
    <property type="entry name" value="rSAM"/>
</dbReference>
<dbReference type="NCBIfam" id="TIGR00048">
    <property type="entry name" value="rRNA_mod_RlmN"/>
    <property type="match status" value="1"/>
</dbReference>
<dbReference type="PANTHER" id="PTHR30544">
    <property type="entry name" value="23S RRNA METHYLTRANSFERASE"/>
    <property type="match status" value="1"/>
</dbReference>
<dbReference type="PANTHER" id="PTHR30544:SF5">
    <property type="entry name" value="RADICAL SAM CORE DOMAIN-CONTAINING PROTEIN"/>
    <property type="match status" value="1"/>
</dbReference>
<dbReference type="Pfam" id="PF04055">
    <property type="entry name" value="Radical_SAM"/>
    <property type="match status" value="1"/>
</dbReference>
<dbReference type="PIRSF" id="PIRSF006004">
    <property type="entry name" value="CHP00048"/>
    <property type="match status" value="1"/>
</dbReference>
<dbReference type="SFLD" id="SFLDF00275">
    <property type="entry name" value="adenosine_C2_methyltransferase"/>
    <property type="match status" value="1"/>
</dbReference>
<dbReference type="SFLD" id="SFLDS00029">
    <property type="entry name" value="Radical_SAM"/>
    <property type="match status" value="1"/>
</dbReference>
<dbReference type="SUPFAM" id="SSF102114">
    <property type="entry name" value="Radical SAM enzymes"/>
    <property type="match status" value="1"/>
</dbReference>
<dbReference type="PROSITE" id="PS51918">
    <property type="entry name" value="RADICAL_SAM"/>
    <property type="match status" value="1"/>
</dbReference>